<protein>
    <recommendedName>
        <fullName evidence="1">Large ribosomal subunit protein bL19</fullName>
    </recommendedName>
    <alternativeName>
        <fullName evidence="3">50S ribosomal protein L19</fullName>
    </alternativeName>
</protein>
<sequence length="131" mass="14764">MEETMNNQEAPETSEEETVAVENTKAEKVLPNFGPGDTIKVHARIKEGDKERIQMFQGVVLKVKQAADGGNFTVRRISYGVGVERTFPFLSPNVTKVEIMKKGRVRRARLFYLRKLSGKAARIKEVKQTPS</sequence>
<feature type="chain" id="PRO_1000080348" description="Large ribosomal subunit protein bL19">
    <location>
        <begin position="1"/>
        <end position="131"/>
    </location>
</feature>
<feature type="region of interest" description="Disordered" evidence="2">
    <location>
        <begin position="1"/>
        <end position="20"/>
    </location>
</feature>
<feature type="compositionally biased region" description="Polar residues" evidence="2">
    <location>
        <begin position="1"/>
        <end position="11"/>
    </location>
</feature>
<proteinExistence type="inferred from homology"/>
<dbReference type="EMBL" id="CP000688">
    <property type="protein sequence ID" value="ABQ16903.1"/>
    <property type="molecule type" value="Genomic_DNA"/>
</dbReference>
<dbReference type="SMR" id="A5FSC8"/>
<dbReference type="KEGG" id="deb:DehaBAV1_0317"/>
<dbReference type="PATRIC" id="fig|216389.18.peg.356"/>
<dbReference type="HOGENOM" id="CLU_103507_2_0_0"/>
<dbReference type="GO" id="GO:0022625">
    <property type="term" value="C:cytosolic large ribosomal subunit"/>
    <property type="evidence" value="ECO:0007669"/>
    <property type="project" value="TreeGrafter"/>
</dbReference>
<dbReference type="GO" id="GO:0003735">
    <property type="term" value="F:structural constituent of ribosome"/>
    <property type="evidence" value="ECO:0007669"/>
    <property type="project" value="InterPro"/>
</dbReference>
<dbReference type="GO" id="GO:0006412">
    <property type="term" value="P:translation"/>
    <property type="evidence" value="ECO:0007669"/>
    <property type="project" value="UniProtKB-UniRule"/>
</dbReference>
<dbReference type="Gene3D" id="2.30.30.790">
    <property type="match status" value="1"/>
</dbReference>
<dbReference type="HAMAP" id="MF_00402">
    <property type="entry name" value="Ribosomal_bL19"/>
    <property type="match status" value="1"/>
</dbReference>
<dbReference type="InterPro" id="IPR001857">
    <property type="entry name" value="Ribosomal_bL19"/>
</dbReference>
<dbReference type="InterPro" id="IPR018257">
    <property type="entry name" value="Ribosomal_bL19_CS"/>
</dbReference>
<dbReference type="InterPro" id="IPR038657">
    <property type="entry name" value="Ribosomal_bL19_sf"/>
</dbReference>
<dbReference type="InterPro" id="IPR008991">
    <property type="entry name" value="Translation_prot_SH3-like_sf"/>
</dbReference>
<dbReference type="NCBIfam" id="TIGR01024">
    <property type="entry name" value="rplS_bact"/>
    <property type="match status" value="1"/>
</dbReference>
<dbReference type="PANTHER" id="PTHR15680:SF9">
    <property type="entry name" value="LARGE RIBOSOMAL SUBUNIT PROTEIN BL19M"/>
    <property type="match status" value="1"/>
</dbReference>
<dbReference type="PANTHER" id="PTHR15680">
    <property type="entry name" value="RIBOSOMAL PROTEIN L19"/>
    <property type="match status" value="1"/>
</dbReference>
<dbReference type="Pfam" id="PF01245">
    <property type="entry name" value="Ribosomal_L19"/>
    <property type="match status" value="1"/>
</dbReference>
<dbReference type="PIRSF" id="PIRSF002191">
    <property type="entry name" value="Ribosomal_L19"/>
    <property type="match status" value="1"/>
</dbReference>
<dbReference type="PRINTS" id="PR00061">
    <property type="entry name" value="RIBOSOMALL19"/>
</dbReference>
<dbReference type="SUPFAM" id="SSF50104">
    <property type="entry name" value="Translation proteins SH3-like domain"/>
    <property type="match status" value="1"/>
</dbReference>
<dbReference type="PROSITE" id="PS01015">
    <property type="entry name" value="RIBOSOMAL_L19"/>
    <property type="match status" value="1"/>
</dbReference>
<comment type="function">
    <text evidence="1">This protein is located at the 30S-50S ribosomal subunit interface and may play a role in the structure and function of the aminoacyl-tRNA binding site.</text>
</comment>
<comment type="similarity">
    <text evidence="1">Belongs to the bacterial ribosomal protein bL19 family.</text>
</comment>
<organism>
    <name type="scientific">Dehalococcoides mccartyi (strain ATCC BAA-2100 / JCM 16839 / KCTC 5957 / BAV1)</name>
    <dbReference type="NCBI Taxonomy" id="216389"/>
    <lineage>
        <taxon>Bacteria</taxon>
        <taxon>Bacillati</taxon>
        <taxon>Chloroflexota</taxon>
        <taxon>Dehalococcoidia</taxon>
        <taxon>Dehalococcoidales</taxon>
        <taxon>Dehalococcoidaceae</taxon>
        <taxon>Dehalococcoides</taxon>
    </lineage>
</organism>
<name>RL19_DEHMB</name>
<evidence type="ECO:0000255" key="1">
    <source>
        <dbReference type="HAMAP-Rule" id="MF_00402"/>
    </source>
</evidence>
<evidence type="ECO:0000256" key="2">
    <source>
        <dbReference type="SAM" id="MobiDB-lite"/>
    </source>
</evidence>
<evidence type="ECO:0000305" key="3"/>
<reference key="1">
    <citation type="submission" date="2007-05" db="EMBL/GenBank/DDBJ databases">
        <title>Complete sequence of Dehalococcoides sp. BAV1.</title>
        <authorList>
            <consortium name="US DOE Joint Genome Institute"/>
            <person name="Copeland A."/>
            <person name="Lucas S."/>
            <person name="Lapidus A."/>
            <person name="Barry K."/>
            <person name="Detter J.C."/>
            <person name="Glavina del Rio T."/>
            <person name="Hammon N."/>
            <person name="Israni S."/>
            <person name="Pitluck S."/>
            <person name="Lowry S."/>
            <person name="Clum A."/>
            <person name="Schmutz J."/>
            <person name="Larimer F."/>
            <person name="Land M."/>
            <person name="Hauser L."/>
            <person name="Kyrpides N."/>
            <person name="Kim E."/>
            <person name="Ritalahti K.M."/>
            <person name="Loeffler F."/>
            <person name="Richardson P."/>
        </authorList>
    </citation>
    <scope>NUCLEOTIDE SEQUENCE [LARGE SCALE GENOMIC DNA]</scope>
    <source>
        <strain>ATCC BAA-2100 / JCM 16839 / KCTC 5957 / BAV1</strain>
    </source>
</reference>
<keyword id="KW-0687">Ribonucleoprotein</keyword>
<keyword id="KW-0689">Ribosomal protein</keyword>
<accession>A5FSC8</accession>
<gene>
    <name evidence="1" type="primary">rplS</name>
    <name type="ordered locus">DehaBAV1_0317</name>
</gene>